<accession>B6JPK6</accession>
<evidence type="ECO:0000255" key="1">
    <source>
        <dbReference type="HAMAP-Rule" id="MF_00091"/>
    </source>
</evidence>
<proteinExistence type="inferred from homology"/>
<name>LUXS_HELP2</name>
<sequence>MKTPKMNVESFNLDHTKVKAPYVRVADRKKGVNGDVIVKYDVRFKQPNQDHMDMPSLHSLEHLVAEIIRNHANYVVDWSPMGCQTGFYLTVLNHDNYTEVLEVLEKTMQDVLKATEVPASNEKQCGWAANHTLEGAKNLARAFLDKRAEWSEVGV</sequence>
<comment type="function">
    <text evidence="1">Involved in the synthesis of autoinducer 2 (AI-2) which is secreted by bacteria and is used to communicate both the cell density and the metabolic potential of the environment. The regulation of gene expression in response to changes in cell density is called quorum sensing. Catalyzes the transformation of S-ribosylhomocysteine (RHC) to homocysteine (HC) and 4,5-dihydroxy-2,3-pentadione (DPD).</text>
</comment>
<comment type="catalytic activity">
    <reaction evidence="1">
        <text>S-(5-deoxy-D-ribos-5-yl)-L-homocysteine = (S)-4,5-dihydroxypentane-2,3-dione + L-homocysteine</text>
        <dbReference type="Rhea" id="RHEA:17753"/>
        <dbReference type="ChEBI" id="CHEBI:29484"/>
        <dbReference type="ChEBI" id="CHEBI:58195"/>
        <dbReference type="ChEBI" id="CHEBI:58199"/>
        <dbReference type="EC" id="4.4.1.21"/>
    </reaction>
</comment>
<comment type="cofactor">
    <cofactor evidence="1">
        <name>Fe cation</name>
        <dbReference type="ChEBI" id="CHEBI:24875"/>
    </cofactor>
    <text evidence="1">Binds 1 Fe cation per subunit.</text>
</comment>
<comment type="subunit">
    <text evidence="1">Homodimer.</text>
</comment>
<comment type="similarity">
    <text evidence="1">Belongs to the LuxS family.</text>
</comment>
<keyword id="KW-0071">Autoinducer synthesis</keyword>
<keyword id="KW-0408">Iron</keyword>
<keyword id="KW-0456">Lyase</keyword>
<keyword id="KW-0479">Metal-binding</keyword>
<keyword id="KW-0673">Quorum sensing</keyword>
<reference key="1">
    <citation type="submission" date="2008-10" db="EMBL/GenBank/DDBJ databases">
        <title>The complete genome sequence of Helicobacter pylori strain P12.</title>
        <authorList>
            <person name="Fischer W."/>
            <person name="Windhager L."/>
            <person name="Karnholz A."/>
            <person name="Zeiller M."/>
            <person name="Zimmer R."/>
            <person name="Haas R."/>
        </authorList>
    </citation>
    <scope>NUCLEOTIDE SEQUENCE [LARGE SCALE GENOMIC DNA]</scope>
    <source>
        <strain>P12</strain>
    </source>
</reference>
<feature type="chain" id="PRO_1000093309" description="S-ribosylhomocysteine lyase">
    <location>
        <begin position="1"/>
        <end position="155"/>
    </location>
</feature>
<feature type="binding site" evidence="1">
    <location>
        <position position="58"/>
    </location>
    <ligand>
        <name>Fe cation</name>
        <dbReference type="ChEBI" id="CHEBI:24875"/>
    </ligand>
</feature>
<feature type="binding site" evidence="1">
    <location>
        <position position="62"/>
    </location>
    <ligand>
        <name>Fe cation</name>
        <dbReference type="ChEBI" id="CHEBI:24875"/>
    </ligand>
</feature>
<feature type="binding site" evidence="1">
    <location>
        <position position="125"/>
    </location>
    <ligand>
        <name>Fe cation</name>
        <dbReference type="ChEBI" id="CHEBI:24875"/>
    </ligand>
</feature>
<dbReference type="EC" id="4.4.1.21" evidence="1"/>
<dbReference type="EMBL" id="CP001217">
    <property type="protein sequence ID" value="ACJ07267.1"/>
    <property type="molecule type" value="Genomic_DNA"/>
</dbReference>
<dbReference type="SMR" id="B6JPK6"/>
<dbReference type="KEGG" id="hpp:HPP12_0107"/>
<dbReference type="HOGENOM" id="CLU_107531_2_0_7"/>
<dbReference type="Proteomes" id="UP000008198">
    <property type="component" value="Chromosome"/>
</dbReference>
<dbReference type="GO" id="GO:0005506">
    <property type="term" value="F:iron ion binding"/>
    <property type="evidence" value="ECO:0007669"/>
    <property type="project" value="InterPro"/>
</dbReference>
<dbReference type="GO" id="GO:0043768">
    <property type="term" value="F:S-ribosylhomocysteine lyase activity"/>
    <property type="evidence" value="ECO:0007669"/>
    <property type="project" value="UniProtKB-UniRule"/>
</dbReference>
<dbReference type="GO" id="GO:0009372">
    <property type="term" value="P:quorum sensing"/>
    <property type="evidence" value="ECO:0007669"/>
    <property type="project" value="UniProtKB-UniRule"/>
</dbReference>
<dbReference type="Gene3D" id="3.30.1360.80">
    <property type="entry name" value="S-ribosylhomocysteinase (LuxS)"/>
    <property type="match status" value="1"/>
</dbReference>
<dbReference type="HAMAP" id="MF_00091">
    <property type="entry name" value="LuxS"/>
    <property type="match status" value="1"/>
</dbReference>
<dbReference type="InterPro" id="IPR037005">
    <property type="entry name" value="LuxS_sf"/>
</dbReference>
<dbReference type="InterPro" id="IPR011249">
    <property type="entry name" value="Metalloenz_LuxS/M16"/>
</dbReference>
<dbReference type="InterPro" id="IPR003815">
    <property type="entry name" value="S-ribosylhomocysteinase"/>
</dbReference>
<dbReference type="NCBIfam" id="NF002604">
    <property type="entry name" value="PRK02260.1-4"/>
    <property type="match status" value="1"/>
</dbReference>
<dbReference type="PANTHER" id="PTHR35799">
    <property type="entry name" value="S-RIBOSYLHOMOCYSTEINE LYASE"/>
    <property type="match status" value="1"/>
</dbReference>
<dbReference type="PANTHER" id="PTHR35799:SF1">
    <property type="entry name" value="S-RIBOSYLHOMOCYSTEINE LYASE"/>
    <property type="match status" value="1"/>
</dbReference>
<dbReference type="Pfam" id="PF02664">
    <property type="entry name" value="LuxS"/>
    <property type="match status" value="1"/>
</dbReference>
<dbReference type="PIRSF" id="PIRSF006160">
    <property type="entry name" value="AI2"/>
    <property type="match status" value="1"/>
</dbReference>
<dbReference type="PRINTS" id="PR01487">
    <property type="entry name" value="LUXSPROTEIN"/>
</dbReference>
<dbReference type="SUPFAM" id="SSF63411">
    <property type="entry name" value="LuxS/MPP-like metallohydrolase"/>
    <property type="match status" value="1"/>
</dbReference>
<protein>
    <recommendedName>
        <fullName evidence="1">S-ribosylhomocysteine lyase</fullName>
        <ecNumber evidence="1">4.4.1.21</ecNumber>
    </recommendedName>
    <alternativeName>
        <fullName evidence="1">AI-2 synthesis protein</fullName>
    </alternativeName>
    <alternativeName>
        <fullName evidence="1">Autoinducer-2 production protein LuxS</fullName>
    </alternativeName>
</protein>
<gene>
    <name evidence="1" type="primary">luxS</name>
    <name type="ordered locus">HPP12_0107</name>
</gene>
<organism>
    <name type="scientific">Helicobacter pylori (strain P12)</name>
    <dbReference type="NCBI Taxonomy" id="570508"/>
    <lineage>
        <taxon>Bacteria</taxon>
        <taxon>Pseudomonadati</taxon>
        <taxon>Campylobacterota</taxon>
        <taxon>Epsilonproteobacteria</taxon>
        <taxon>Campylobacterales</taxon>
        <taxon>Helicobacteraceae</taxon>
        <taxon>Helicobacter</taxon>
    </lineage>
</organism>